<feature type="chain" id="PRO_1000013396" description="Large ribosomal subunit protein bL34">
    <location>
        <begin position="1"/>
        <end position="44"/>
    </location>
</feature>
<protein>
    <recommendedName>
        <fullName evidence="1">Large ribosomal subunit protein bL34</fullName>
    </recommendedName>
    <alternativeName>
        <fullName evidence="2">50S ribosomal protein L34</fullName>
    </alternativeName>
</protein>
<evidence type="ECO:0000255" key="1">
    <source>
        <dbReference type="HAMAP-Rule" id="MF_00391"/>
    </source>
</evidence>
<evidence type="ECO:0000305" key="2"/>
<name>RL34_POLNA</name>
<sequence length="44" mass="5067">MKRTYQPSKVKRARTHGFLTRMKTRGGRAVIAARRAKGRKRLAV</sequence>
<comment type="similarity">
    <text evidence="1">Belongs to the bacterial ribosomal protein bL34 family.</text>
</comment>
<keyword id="KW-1185">Reference proteome</keyword>
<keyword id="KW-0687">Ribonucleoprotein</keyword>
<keyword id="KW-0689">Ribosomal protein</keyword>
<reference key="1">
    <citation type="journal article" date="2009" name="Environ. Microbiol.">
        <title>The genome of Polaromonas naphthalenivorans strain CJ2, isolated from coal tar-contaminated sediment, reveals physiological and metabolic versatility and evolution through extensive horizontal gene transfer.</title>
        <authorList>
            <person name="Yagi J.M."/>
            <person name="Sims D."/>
            <person name="Brettin T."/>
            <person name="Bruce D."/>
            <person name="Madsen E.L."/>
        </authorList>
    </citation>
    <scope>NUCLEOTIDE SEQUENCE [LARGE SCALE GENOMIC DNA]</scope>
    <source>
        <strain>CJ2</strain>
    </source>
</reference>
<organism>
    <name type="scientific">Polaromonas naphthalenivorans (strain CJ2)</name>
    <dbReference type="NCBI Taxonomy" id="365044"/>
    <lineage>
        <taxon>Bacteria</taxon>
        <taxon>Pseudomonadati</taxon>
        <taxon>Pseudomonadota</taxon>
        <taxon>Betaproteobacteria</taxon>
        <taxon>Burkholderiales</taxon>
        <taxon>Comamonadaceae</taxon>
        <taxon>Polaromonas</taxon>
    </lineage>
</organism>
<proteinExistence type="inferred from homology"/>
<dbReference type="EMBL" id="CP000529">
    <property type="protein sequence ID" value="ABM39406.1"/>
    <property type="molecule type" value="Genomic_DNA"/>
</dbReference>
<dbReference type="RefSeq" id="WP_007862708.1">
    <property type="nucleotide sequence ID" value="NC_008781.1"/>
</dbReference>
<dbReference type="SMR" id="A1VUS8"/>
<dbReference type="STRING" id="365044.Pnap_4116"/>
<dbReference type="KEGG" id="pna:Pnap_4116"/>
<dbReference type="eggNOG" id="COG0230">
    <property type="taxonomic scope" value="Bacteria"/>
</dbReference>
<dbReference type="HOGENOM" id="CLU_129938_2_0_4"/>
<dbReference type="Proteomes" id="UP000000644">
    <property type="component" value="Chromosome"/>
</dbReference>
<dbReference type="GO" id="GO:1990904">
    <property type="term" value="C:ribonucleoprotein complex"/>
    <property type="evidence" value="ECO:0007669"/>
    <property type="project" value="UniProtKB-KW"/>
</dbReference>
<dbReference type="GO" id="GO:0005840">
    <property type="term" value="C:ribosome"/>
    <property type="evidence" value="ECO:0007669"/>
    <property type="project" value="UniProtKB-KW"/>
</dbReference>
<dbReference type="GO" id="GO:0003735">
    <property type="term" value="F:structural constituent of ribosome"/>
    <property type="evidence" value="ECO:0007669"/>
    <property type="project" value="InterPro"/>
</dbReference>
<dbReference type="GO" id="GO:0006412">
    <property type="term" value="P:translation"/>
    <property type="evidence" value="ECO:0007669"/>
    <property type="project" value="UniProtKB-UniRule"/>
</dbReference>
<dbReference type="FunFam" id="1.10.287.3980:FF:000001">
    <property type="entry name" value="Mitochondrial ribosomal protein L34"/>
    <property type="match status" value="1"/>
</dbReference>
<dbReference type="Gene3D" id="1.10.287.3980">
    <property type="match status" value="1"/>
</dbReference>
<dbReference type="HAMAP" id="MF_00391">
    <property type="entry name" value="Ribosomal_bL34"/>
    <property type="match status" value="1"/>
</dbReference>
<dbReference type="InterPro" id="IPR000271">
    <property type="entry name" value="Ribosomal_bL34"/>
</dbReference>
<dbReference type="InterPro" id="IPR020939">
    <property type="entry name" value="Ribosomal_bL34_CS"/>
</dbReference>
<dbReference type="NCBIfam" id="TIGR01030">
    <property type="entry name" value="rpmH_bact"/>
    <property type="match status" value="1"/>
</dbReference>
<dbReference type="PANTHER" id="PTHR14503:SF4">
    <property type="entry name" value="LARGE RIBOSOMAL SUBUNIT PROTEIN BL34M"/>
    <property type="match status" value="1"/>
</dbReference>
<dbReference type="PANTHER" id="PTHR14503">
    <property type="entry name" value="MITOCHONDRIAL RIBOSOMAL PROTEIN 34 FAMILY MEMBER"/>
    <property type="match status" value="1"/>
</dbReference>
<dbReference type="Pfam" id="PF00468">
    <property type="entry name" value="Ribosomal_L34"/>
    <property type="match status" value="1"/>
</dbReference>
<dbReference type="PROSITE" id="PS00784">
    <property type="entry name" value="RIBOSOMAL_L34"/>
    <property type="match status" value="1"/>
</dbReference>
<gene>
    <name evidence="1" type="primary">rpmH</name>
    <name type="ordered locus">Pnap_4116</name>
</gene>
<accession>A1VUS8</accession>